<reference key="1">
    <citation type="journal article" date="2005" name="Genome Biol.">
        <title>Full-length cDNAs from chicken bursal lymphocytes to facilitate gene function analysis.</title>
        <authorList>
            <person name="Caldwell R.B."/>
            <person name="Kierzek A.M."/>
            <person name="Arakawa H."/>
            <person name="Bezzubov Y."/>
            <person name="Zaim J."/>
            <person name="Fiedler P."/>
            <person name="Kutter S."/>
            <person name="Blagodatski A."/>
            <person name="Kostovska D."/>
            <person name="Koter M."/>
            <person name="Plachy J."/>
            <person name="Carninci P."/>
            <person name="Hayashizaki Y."/>
            <person name="Buerstedde J.-M."/>
        </authorList>
    </citation>
    <scope>NUCLEOTIDE SEQUENCE [LARGE SCALE MRNA]</scope>
    <source>
        <strain>CB</strain>
        <tissue>Bursa of Fabricius</tissue>
    </source>
</reference>
<dbReference type="EMBL" id="AJ719952">
    <property type="protein sequence ID" value="CAG31611.1"/>
    <property type="molecule type" value="mRNA"/>
</dbReference>
<dbReference type="RefSeq" id="NP_001025763.1">
    <property type="nucleotide sequence ID" value="NM_001030592.1"/>
</dbReference>
<dbReference type="RefSeq" id="XP_015148538.1">
    <property type="nucleotide sequence ID" value="XM_015293052.1"/>
</dbReference>
<dbReference type="RefSeq" id="XP_015148539.1">
    <property type="nucleotide sequence ID" value="XM_015293053.1"/>
</dbReference>
<dbReference type="RefSeq" id="XP_015148540.1">
    <property type="nucleotide sequence ID" value="XM_015293054.1"/>
</dbReference>
<dbReference type="RefSeq" id="XP_046782218.1">
    <property type="nucleotide sequence ID" value="XM_046926262.1"/>
</dbReference>
<dbReference type="SMR" id="Q5ZKY2"/>
<dbReference type="FunCoup" id="Q5ZKY2">
    <property type="interactions" value="986"/>
</dbReference>
<dbReference type="STRING" id="9031.ENSGALP00000051055"/>
<dbReference type="PaxDb" id="9031-ENSGALP00000035497"/>
<dbReference type="GeneID" id="415961"/>
<dbReference type="KEGG" id="gga:415961"/>
<dbReference type="CTD" id="10533"/>
<dbReference type="VEuPathDB" id="HostDB:geneid_415961"/>
<dbReference type="eggNOG" id="KOG2337">
    <property type="taxonomic scope" value="Eukaryota"/>
</dbReference>
<dbReference type="HOGENOM" id="CLU_012998_1_0_1"/>
<dbReference type="InParanoid" id="Q5ZKY2"/>
<dbReference type="OrthoDB" id="338614at2759"/>
<dbReference type="PhylomeDB" id="Q5ZKY2"/>
<dbReference type="Reactome" id="R-GGA-1632852">
    <property type="pathway name" value="Macroautophagy"/>
</dbReference>
<dbReference type="Reactome" id="R-GGA-6798695">
    <property type="pathway name" value="Neutrophil degranulation"/>
</dbReference>
<dbReference type="Reactome" id="R-GGA-983168">
    <property type="pathway name" value="Antigen processing: Ubiquitination &amp; Proteasome degradation"/>
</dbReference>
<dbReference type="PRO" id="PR:Q5ZKY2"/>
<dbReference type="Proteomes" id="UP000000539">
    <property type="component" value="Chromosome 12"/>
</dbReference>
<dbReference type="Bgee" id="ENSGALG00000004932">
    <property type="expression patterns" value="Expressed in spermatid and 14 other cell types or tissues"/>
</dbReference>
<dbReference type="GO" id="GO:0005737">
    <property type="term" value="C:cytoplasm"/>
    <property type="evidence" value="ECO:0000318"/>
    <property type="project" value="GO_Central"/>
</dbReference>
<dbReference type="GO" id="GO:0000407">
    <property type="term" value="C:phagophore assembly site"/>
    <property type="evidence" value="ECO:0000318"/>
    <property type="project" value="GO_Central"/>
</dbReference>
<dbReference type="GO" id="GO:0019778">
    <property type="term" value="F:Atg12 activating enzyme activity"/>
    <property type="evidence" value="ECO:0000250"/>
    <property type="project" value="UniProtKB"/>
</dbReference>
<dbReference type="GO" id="GO:0019779">
    <property type="term" value="F:Atg8 activating enzyme activity"/>
    <property type="evidence" value="ECO:0000318"/>
    <property type="project" value="GO_Central"/>
</dbReference>
<dbReference type="GO" id="GO:0000045">
    <property type="term" value="P:autophagosome assembly"/>
    <property type="evidence" value="ECO:0000318"/>
    <property type="project" value="GO_Central"/>
</dbReference>
<dbReference type="GO" id="GO:0006914">
    <property type="term" value="P:autophagy"/>
    <property type="evidence" value="ECO:0000250"/>
    <property type="project" value="UniProtKB"/>
</dbReference>
<dbReference type="GO" id="GO:0006995">
    <property type="term" value="P:cellular response to nitrogen starvation"/>
    <property type="evidence" value="ECO:0000318"/>
    <property type="project" value="GO_Central"/>
</dbReference>
<dbReference type="GO" id="GO:0000423">
    <property type="term" value="P:mitophagy"/>
    <property type="evidence" value="ECO:0000318"/>
    <property type="project" value="GO_Central"/>
</dbReference>
<dbReference type="GO" id="GO:0034727">
    <property type="term" value="P:piecemeal microautophagy of the nucleus"/>
    <property type="evidence" value="ECO:0000318"/>
    <property type="project" value="GO_Central"/>
</dbReference>
<dbReference type="GO" id="GO:0032446">
    <property type="term" value="P:protein modification by small protein conjugation"/>
    <property type="evidence" value="ECO:0000318"/>
    <property type="project" value="GO_Central"/>
</dbReference>
<dbReference type="GO" id="GO:0015031">
    <property type="term" value="P:protein transport"/>
    <property type="evidence" value="ECO:0007669"/>
    <property type="project" value="UniProtKB-KW"/>
</dbReference>
<dbReference type="GO" id="GO:0042752">
    <property type="term" value="P:regulation of circadian rhythm"/>
    <property type="evidence" value="ECO:0000250"/>
    <property type="project" value="UniProtKB"/>
</dbReference>
<dbReference type="GO" id="GO:0048511">
    <property type="term" value="P:rhythmic process"/>
    <property type="evidence" value="ECO:0007669"/>
    <property type="project" value="UniProtKB-KW"/>
</dbReference>
<dbReference type="CDD" id="cd01486">
    <property type="entry name" value="Apg7"/>
    <property type="match status" value="1"/>
</dbReference>
<dbReference type="FunFam" id="3.40.140.100:FF:000001">
    <property type="entry name" value="Ubiquitin-like modifier-activating enzyme ATG7"/>
    <property type="match status" value="1"/>
</dbReference>
<dbReference type="FunFam" id="3.40.50.720:FF:000156">
    <property type="entry name" value="Ubiquitin-like modifier-activating enzyme ATG7"/>
    <property type="match status" value="1"/>
</dbReference>
<dbReference type="FunFam" id="3.40.140.70:FF:000001">
    <property type="entry name" value="Ubiquitin-like modifier-activating enzyme atg7"/>
    <property type="match status" value="1"/>
</dbReference>
<dbReference type="Gene3D" id="3.40.50.720">
    <property type="entry name" value="NAD(P)-binding Rossmann-like Domain"/>
    <property type="match status" value="1"/>
</dbReference>
<dbReference type="Gene3D" id="3.40.140.100">
    <property type="entry name" value="Ubiquitin-like modifier-activating enzyme ATG7 C-terminal domain"/>
    <property type="match status" value="1"/>
</dbReference>
<dbReference type="Gene3D" id="3.40.140.70">
    <property type="entry name" value="Ubiquitin-like modifier-activating enzyme ATG7 N-terminal domain"/>
    <property type="match status" value="1"/>
</dbReference>
<dbReference type="InterPro" id="IPR006285">
    <property type="entry name" value="Atg7"/>
</dbReference>
<dbReference type="InterPro" id="IPR032197">
    <property type="entry name" value="Atg7_N"/>
</dbReference>
<dbReference type="InterPro" id="IPR042522">
    <property type="entry name" value="Atg7_N_1"/>
</dbReference>
<dbReference type="InterPro" id="IPR042523">
    <property type="entry name" value="Atg7_N_2"/>
</dbReference>
<dbReference type="InterPro" id="IPR045886">
    <property type="entry name" value="ThiF/MoeB/HesA"/>
</dbReference>
<dbReference type="InterPro" id="IPR000594">
    <property type="entry name" value="ThiF_NAD_FAD-bd"/>
</dbReference>
<dbReference type="InterPro" id="IPR035985">
    <property type="entry name" value="Ubiquitin-activating_enz"/>
</dbReference>
<dbReference type="NCBIfam" id="TIGR01381">
    <property type="entry name" value="E1_like_apg7"/>
    <property type="match status" value="1"/>
</dbReference>
<dbReference type="PANTHER" id="PTHR10953">
    <property type="entry name" value="UBIQUITIN-ACTIVATING ENZYME E1"/>
    <property type="match status" value="1"/>
</dbReference>
<dbReference type="PANTHER" id="PTHR10953:SF3">
    <property type="entry name" value="UBIQUITIN-LIKE MODIFIER-ACTIVATING ENZYME ATG7"/>
    <property type="match status" value="1"/>
</dbReference>
<dbReference type="Pfam" id="PF16420">
    <property type="entry name" value="ATG7_N"/>
    <property type="match status" value="1"/>
</dbReference>
<dbReference type="Pfam" id="PF00899">
    <property type="entry name" value="ThiF"/>
    <property type="match status" value="1"/>
</dbReference>
<dbReference type="SUPFAM" id="SSF69572">
    <property type="entry name" value="Activating enzymes of the ubiquitin-like proteins"/>
    <property type="match status" value="1"/>
</dbReference>
<organism>
    <name type="scientific">Gallus gallus</name>
    <name type="common">Chicken</name>
    <dbReference type="NCBI Taxonomy" id="9031"/>
    <lineage>
        <taxon>Eukaryota</taxon>
        <taxon>Metazoa</taxon>
        <taxon>Chordata</taxon>
        <taxon>Craniata</taxon>
        <taxon>Vertebrata</taxon>
        <taxon>Euteleostomi</taxon>
        <taxon>Archelosauria</taxon>
        <taxon>Archosauria</taxon>
        <taxon>Dinosauria</taxon>
        <taxon>Saurischia</taxon>
        <taxon>Theropoda</taxon>
        <taxon>Coelurosauria</taxon>
        <taxon>Aves</taxon>
        <taxon>Neognathae</taxon>
        <taxon>Galloanserae</taxon>
        <taxon>Galliformes</taxon>
        <taxon>Phasianidae</taxon>
        <taxon>Phasianinae</taxon>
        <taxon>Gallus</taxon>
    </lineage>
</organism>
<comment type="function">
    <text evidence="2 3">E1-like activating enzyme involved in the 2 ubiquitin-like systems required for cytoplasm to vacuole transport (Cvt) and autophagy. Activates ATG12 for its conjugation with ATG5 as well as the ATG8 family proteins for their conjugation with phosphatidylethanolamine. Both systems are needed for the ATG8 association to Cvt vesicles and autophagosomes membranes. Required for autophagic death induced by caspase-8 inhibition. Facilitates LC3-I lipidation with phosphatidylethanolamine to form LC3-II which is found on autophagosomal membranes (By similarity). Required for mitophagy which contributes to regulate mitochondrial quantity and quality by eliminating the mitochondria to a basal level to fulfill cellular energy requirements and preventing excess ROS production. Modulates p53/TP53 activity to regulate cell cycle and survival during metabolic stress (By similarity). Plays a role in regulating the liver clock and glucose metabolism by mediating the autophagic degradation of CRY1 (clock repressor) in a time-dependent manner (By similarity).</text>
</comment>
<comment type="subunit">
    <text evidence="1">Homodimer. Interacts with ATG3 and ATG12. The complex, composed of ATG3 and ATG7, plays a role in the conjugation of ATG12 to ATG5 (By similarity).</text>
</comment>
<comment type="subcellular location">
    <subcellularLocation>
        <location evidence="1">Cytoplasm</location>
    </subcellularLocation>
    <subcellularLocation>
        <location evidence="1">Preautophagosomal structure</location>
    </subcellularLocation>
</comment>
<comment type="domain">
    <text evidence="1">The C-terminal part of the protein is essential for the dimerization and interaction with ATG3 and ATG12.</text>
</comment>
<comment type="similarity">
    <text evidence="4">Belongs to the ATG7 family.</text>
</comment>
<feature type="chain" id="PRO_0000212809" description="Ubiquitin-like modifier-activating enzyme ATG7">
    <location>
        <begin position="1"/>
        <end position="709"/>
    </location>
</feature>
<feature type="active site" description="Glycyl thioester intermediate" evidence="1">
    <location>
        <position position="578"/>
    </location>
</feature>
<sequence length="709" mass="78800">MAAVSNESQNPVDPGSSKLQFAPFSSALNVGFWHELTQKKLNEYRLDETPKVIKGYYYNGDPSGFPARLTLEYSAFDINASIPARCCPAFGTLYNTNTFETFKSCDKKSLLEKEANEIWESIKSGAALENPMLLNRFLLLTFADLKKYHFYYWFCYPALCFPDGIHVIQKPVCLGDRFSLNQIQALQKAYDELCQTEGVTAFPYFLIKYHDNSVVVSPLKKWDGFFQDQGGKVTVGVYDPCNLSHYPGWPLRNFLILASHKWGNILQSIEVLCFRDRTMQGVRDITHSIIFEIKLPQGAFGPDCPKAVGWEKNQKGGMGPRVVNLSECMDPKRLAESSVDLNLKLMCWRLVPTLDLEKIVSAKCLLLGAGTLGCSVARTLMGWGVRKITFVDNARISYSNPVRQPLYEFEDCLSGGKPKALAAAERLQKIFPGVNSEGYNMSIPMPGHPVNFSEVTMAQARKDVATLEELIDAHDVVFLLMDTRESRWLPAVIAASKRKLVINAALGFDTFVVMRHGLKKPKQQETGNACFSTAPGPSDLLGSSLFSNIPGYKLGCYFCNDVVAPGDSTRDRTLDQQCTVSRPGLAMIAGALAVELMVSVLQHPEGGYAVASSSDDRMNEPPTSLGLVPHQIRGFLSRFDNVLPVSLAFDKCTACSPKVLDQYEREGFNFLAKVFNSSHSFLEDLTGLTLLHQETQAAEIWDMSDDETV</sequence>
<protein>
    <recommendedName>
        <fullName>Ubiquitin-like modifier-activating enzyme ATG7</fullName>
    </recommendedName>
    <alternativeName>
        <fullName>ATG12-activating enzyme E1 ATG7</fullName>
    </alternativeName>
    <alternativeName>
        <fullName>Autophagy-related protein 7</fullName>
        <shortName>APG7-like</shortName>
    </alternativeName>
</protein>
<accession>Q5ZKY2</accession>
<name>ATG7_CHICK</name>
<evidence type="ECO:0000250" key="1"/>
<evidence type="ECO:0000250" key="2">
    <source>
        <dbReference type="UniProtKB" id="O95352"/>
    </source>
</evidence>
<evidence type="ECO:0000250" key="3">
    <source>
        <dbReference type="UniProtKB" id="Q9D906"/>
    </source>
</evidence>
<evidence type="ECO:0000305" key="4"/>
<gene>
    <name type="primary">ATG7</name>
    <name type="synonym">APG7L</name>
    <name type="ORF">RCJMB04_8l10</name>
</gene>
<keyword id="KW-0072">Autophagy</keyword>
<keyword id="KW-0090">Biological rhythms</keyword>
<keyword id="KW-0963">Cytoplasm</keyword>
<keyword id="KW-0653">Protein transport</keyword>
<keyword id="KW-1185">Reference proteome</keyword>
<keyword id="KW-0813">Transport</keyword>
<keyword id="KW-0833">Ubl conjugation pathway</keyword>
<proteinExistence type="evidence at transcript level"/>